<sequence length="377" mass="39216">MSTPSQAEVRRMVAAAGTIVVKVGSSSLTQPSGHLDPDKLDALAAALAQIRLMGGRVVLVSSGAIAAGFGPLGFDERPADVATQQATAAVGQGLLMARYETAFGRFGIRVGQILITAEDTIRATQYRNVERTLDRLLDLGVVPIINENDSLASNEIRFGDNDRLSALVANLVRAEALVLLTDVDALYTAPPSQPGSRRVEYVPNVIDALGDIQVSGSGSKVGTGGMVTKLEAARVAAVSGIPTVLTCASNAGPAMMGDPVGTVFAPVKARGSSRRLWIGFAADPRGAIVVDAGAGQAIRGGRASLLATGALEVHGDFSAGDPVWIDAESGEHLARGLAGFDSEEIPQMLGRNTAQLKRFLGPQYAHPLIHRDNLVLV</sequence>
<organism>
    <name type="scientific">Bifidobacterium longum subsp. infantis (strain ATCC 15697 / DSM 20088 / JCM 1222 / NCTC 11817 / S12)</name>
    <dbReference type="NCBI Taxonomy" id="391904"/>
    <lineage>
        <taxon>Bacteria</taxon>
        <taxon>Bacillati</taxon>
        <taxon>Actinomycetota</taxon>
        <taxon>Actinomycetes</taxon>
        <taxon>Bifidobacteriales</taxon>
        <taxon>Bifidobacteriaceae</taxon>
        <taxon>Bifidobacterium</taxon>
    </lineage>
</organism>
<keyword id="KW-0028">Amino-acid biosynthesis</keyword>
<keyword id="KW-0067">ATP-binding</keyword>
<keyword id="KW-0963">Cytoplasm</keyword>
<keyword id="KW-0418">Kinase</keyword>
<keyword id="KW-0547">Nucleotide-binding</keyword>
<keyword id="KW-0641">Proline biosynthesis</keyword>
<keyword id="KW-0808">Transferase</keyword>
<comment type="function">
    <text evidence="1">Catalyzes the transfer of a phosphate group to glutamate to form L-glutamate 5-phosphate.</text>
</comment>
<comment type="catalytic activity">
    <reaction evidence="1">
        <text>L-glutamate + ATP = L-glutamyl 5-phosphate + ADP</text>
        <dbReference type="Rhea" id="RHEA:14877"/>
        <dbReference type="ChEBI" id="CHEBI:29985"/>
        <dbReference type="ChEBI" id="CHEBI:30616"/>
        <dbReference type="ChEBI" id="CHEBI:58274"/>
        <dbReference type="ChEBI" id="CHEBI:456216"/>
        <dbReference type="EC" id="2.7.2.11"/>
    </reaction>
</comment>
<comment type="pathway">
    <text evidence="1">Amino-acid biosynthesis; L-proline biosynthesis; L-glutamate 5-semialdehyde from L-glutamate: step 1/2.</text>
</comment>
<comment type="subcellular location">
    <subcellularLocation>
        <location evidence="1">Cytoplasm</location>
    </subcellularLocation>
</comment>
<comment type="similarity">
    <text evidence="1">Belongs to the glutamate 5-kinase family.</text>
</comment>
<name>PROB_BIFLS</name>
<evidence type="ECO:0000255" key="1">
    <source>
        <dbReference type="HAMAP-Rule" id="MF_00456"/>
    </source>
</evidence>
<accession>B7GNK0</accession>
<accession>E8MNT3</accession>
<feature type="chain" id="PRO_1000193688" description="Glutamate 5-kinase">
    <location>
        <begin position="1"/>
        <end position="377"/>
    </location>
</feature>
<feature type="domain" description="PUA" evidence="1">
    <location>
        <begin position="285"/>
        <end position="363"/>
    </location>
</feature>
<feature type="binding site" evidence="1">
    <location>
        <position position="22"/>
    </location>
    <ligand>
        <name>ATP</name>
        <dbReference type="ChEBI" id="CHEBI:30616"/>
    </ligand>
</feature>
<feature type="binding site" evidence="1">
    <location>
        <position position="62"/>
    </location>
    <ligand>
        <name>substrate</name>
    </ligand>
</feature>
<feature type="binding site" evidence="1">
    <location>
        <position position="149"/>
    </location>
    <ligand>
        <name>substrate</name>
    </ligand>
</feature>
<feature type="binding site" evidence="1">
    <location>
        <position position="161"/>
    </location>
    <ligand>
        <name>substrate</name>
    </ligand>
</feature>
<feature type="binding site" evidence="1">
    <location>
        <begin position="181"/>
        <end position="182"/>
    </location>
    <ligand>
        <name>ATP</name>
        <dbReference type="ChEBI" id="CHEBI:30616"/>
    </ligand>
</feature>
<feature type="binding site" evidence="1">
    <location>
        <begin position="223"/>
        <end position="229"/>
    </location>
    <ligand>
        <name>ATP</name>
        <dbReference type="ChEBI" id="CHEBI:30616"/>
    </ligand>
</feature>
<protein>
    <recommendedName>
        <fullName evidence="1">Glutamate 5-kinase</fullName>
        <ecNumber evidence="1">2.7.2.11</ecNumber>
    </recommendedName>
    <alternativeName>
        <fullName evidence="1">Gamma-glutamyl kinase</fullName>
        <shortName evidence="1">GK</shortName>
    </alternativeName>
</protein>
<gene>
    <name evidence="1" type="primary">proB</name>
    <name type="ordered locus">Blon_2298</name>
    <name type="ordered locus">BLIJ_2372</name>
</gene>
<reference key="1">
    <citation type="journal article" date="2008" name="Proc. Natl. Acad. Sci. U.S.A.">
        <title>The genome sequence of Bifidobacterium longum subsp. infantis reveals adaptations for milk utilization within the infant microbiome.</title>
        <authorList>
            <person name="Sela D.A."/>
            <person name="Chapman J."/>
            <person name="Adeuya A."/>
            <person name="Kim J.H."/>
            <person name="Chen F."/>
            <person name="Whitehead T.R."/>
            <person name="Lapidus A."/>
            <person name="Rokhsar D.S."/>
            <person name="Lebrilla C.B."/>
            <person name="German J.B."/>
            <person name="Price N.P."/>
            <person name="Richardson P.M."/>
            <person name="Mills D.A."/>
        </authorList>
    </citation>
    <scope>NUCLEOTIDE SEQUENCE [LARGE SCALE GENOMIC DNA]</scope>
    <source>
        <strain>ATCC 15697 / DSM 20088 / JCM 1222 / NCTC 11817 / S12</strain>
    </source>
</reference>
<reference key="2">
    <citation type="journal article" date="2011" name="Nature">
        <title>Bifidobacteria can protect from enteropathogenic infection through production of acetate.</title>
        <authorList>
            <person name="Fukuda S."/>
            <person name="Toh H."/>
            <person name="Hase K."/>
            <person name="Oshima K."/>
            <person name="Nakanishi Y."/>
            <person name="Yoshimura K."/>
            <person name="Tobe T."/>
            <person name="Clarke J.M."/>
            <person name="Topping D.L."/>
            <person name="Suzuki T."/>
            <person name="Taylor T.D."/>
            <person name="Itoh K."/>
            <person name="Kikuchi J."/>
            <person name="Morita H."/>
            <person name="Hattori M."/>
            <person name="Ohno H."/>
        </authorList>
    </citation>
    <scope>NUCLEOTIDE SEQUENCE [LARGE SCALE GENOMIC DNA]</scope>
    <source>
        <strain>ATCC 15697 / DSM 20088 / JCM 1222 / NCTC 11817 / S12</strain>
    </source>
</reference>
<proteinExistence type="inferred from homology"/>
<dbReference type="EC" id="2.7.2.11" evidence="1"/>
<dbReference type="EMBL" id="CP001095">
    <property type="protein sequence ID" value="ACJ53356.1"/>
    <property type="molecule type" value="Genomic_DNA"/>
</dbReference>
<dbReference type="EMBL" id="AP010889">
    <property type="protein sequence ID" value="BAJ69949.1"/>
    <property type="molecule type" value="Genomic_DNA"/>
</dbReference>
<dbReference type="RefSeq" id="WP_012578527.1">
    <property type="nucleotide sequence ID" value="NC_011593.1"/>
</dbReference>
<dbReference type="SMR" id="B7GNK0"/>
<dbReference type="KEGG" id="bln:Blon_2298"/>
<dbReference type="KEGG" id="blon:BLIJ_2372"/>
<dbReference type="PATRIC" id="fig|391904.8.peg.2373"/>
<dbReference type="HOGENOM" id="CLU_025400_2_0_11"/>
<dbReference type="UniPathway" id="UPA00098">
    <property type="reaction ID" value="UER00359"/>
</dbReference>
<dbReference type="Proteomes" id="UP000001360">
    <property type="component" value="Chromosome"/>
</dbReference>
<dbReference type="GO" id="GO:0005829">
    <property type="term" value="C:cytosol"/>
    <property type="evidence" value="ECO:0007669"/>
    <property type="project" value="TreeGrafter"/>
</dbReference>
<dbReference type="GO" id="GO:0005524">
    <property type="term" value="F:ATP binding"/>
    <property type="evidence" value="ECO:0007669"/>
    <property type="project" value="UniProtKB-KW"/>
</dbReference>
<dbReference type="GO" id="GO:0004349">
    <property type="term" value="F:glutamate 5-kinase activity"/>
    <property type="evidence" value="ECO:0007669"/>
    <property type="project" value="UniProtKB-UniRule"/>
</dbReference>
<dbReference type="GO" id="GO:0003723">
    <property type="term" value="F:RNA binding"/>
    <property type="evidence" value="ECO:0007669"/>
    <property type="project" value="InterPro"/>
</dbReference>
<dbReference type="GO" id="GO:0055129">
    <property type="term" value="P:L-proline biosynthetic process"/>
    <property type="evidence" value="ECO:0007669"/>
    <property type="project" value="UniProtKB-UniRule"/>
</dbReference>
<dbReference type="CDD" id="cd04242">
    <property type="entry name" value="AAK_G5K_ProB"/>
    <property type="match status" value="1"/>
</dbReference>
<dbReference type="CDD" id="cd21157">
    <property type="entry name" value="PUA_G5K"/>
    <property type="match status" value="1"/>
</dbReference>
<dbReference type="FunFam" id="3.40.1160.10:FF:000018">
    <property type="entry name" value="Glutamate 5-kinase"/>
    <property type="match status" value="1"/>
</dbReference>
<dbReference type="Gene3D" id="3.40.1160.10">
    <property type="entry name" value="Acetylglutamate kinase-like"/>
    <property type="match status" value="1"/>
</dbReference>
<dbReference type="Gene3D" id="2.30.130.10">
    <property type="entry name" value="PUA domain"/>
    <property type="match status" value="1"/>
</dbReference>
<dbReference type="HAMAP" id="MF_00456">
    <property type="entry name" value="ProB"/>
    <property type="match status" value="1"/>
</dbReference>
<dbReference type="InterPro" id="IPR036393">
    <property type="entry name" value="AceGlu_kinase-like_sf"/>
</dbReference>
<dbReference type="InterPro" id="IPR001048">
    <property type="entry name" value="Asp/Glu/Uridylate_kinase"/>
</dbReference>
<dbReference type="InterPro" id="IPR041739">
    <property type="entry name" value="G5K_ProB"/>
</dbReference>
<dbReference type="InterPro" id="IPR001057">
    <property type="entry name" value="Glu/AcGlu_kinase"/>
</dbReference>
<dbReference type="InterPro" id="IPR011529">
    <property type="entry name" value="Glu_5kinase"/>
</dbReference>
<dbReference type="InterPro" id="IPR005715">
    <property type="entry name" value="Glu_5kinase/COase_Synthase"/>
</dbReference>
<dbReference type="InterPro" id="IPR019797">
    <property type="entry name" value="Glutamate_5-kinase_CS"/>
</dbReference>
<dbReference type="InterPro" id="IPR002478">
    <property type="entry name" value="PUA"/>
</dbReference>
<dbReference type="InterPro" id="IPR015947">
    <property type="entry name" value="PUA-like_sf"/>
</dbReference>
<dbReference type="InterPro" id="IPR036974">
    <property type="entry name" value="PUA_sf"/>
</dbReference>
<dbReference type="NCBIfam" id="TIGR01027">
    <property type="entry name" value="proB"/>
    <property type="match status" value="1"/>
</dbReference>
<dbReference type="PANTHER" id="PTHR43654">
    <property type="entry name" value="GLUTAMATE 5-KINASE"/>
    <property type="match status" value="1"/>
</dbReference>
<dbReference type="PANTHER" id="PTHR43654:SF1">
    <property type="entry name" value="ISOPENTENYL PHOSPHATE KINASE"/>
    <property type="match status" value="1"/>
</dbReference>
<dbReference type="Pfam" id="PF00696">
    <property type="entry name" value="AA_kinase"/>
    <property type="match status" value="1"/>
</dbReference>
<dbReference type="Pfam" id="PF01472">
    <property type="entry name" value="PUA"/>
    <property type="match status" value="1"/>
</dbReference>
<dbReference type="PIRSF" id="PIRSF000729">
    <property type="entry name" value="GK"/>
    <property type="match status" value="1"/>
</dbReference>
<dbReference type="PRINTS" id="PR00474">
    <property type="entry name" value="GLU5KINASE"/>
</dbReference>
<dbReference type="SMART" id="SM00359">
    <property type="entry name" value="PUA"/>
    <property type="match status" value="1"/>
</dbReference>
<dbReference type="SUPFAM" id="SSF53633">
    <property type="entry name" value="Carbamate kinase-like"/>
    <property type="match status" value="1"/>
</dbReference>
<dbReference type="SUPFAM" id="SSF88697">
    <property type="entry name" value="PUA domain-like"/>
    <property type="match status" value="1"/>
</dbReference>
<dbReference type="PROSITE" id="PS00902">
    <property type="entry name" value="GLUTAMATE_5_KINASE"/>
    <property type="match status" value="1"/>
</dbReference>
<dbReference type="PROSITE" id="PS50890">
    <property type="entry name" value="PUA"/>
    <property type="match status" value="1"/>
</dbReference>